<feature type="chain" id="PRO_1000117423" description="2-C-methyl-D-erythritol 2,4-cyclodiphosphate synthase">
    <location>
        <begin position="1"/>
        <end position="159"/>
    </location>
</feature>
<feature type="binding site" evidence="1">
    <location>
        <begin position="10"/>
        <end position="12"/>
    </location>
    <ligand>
        <name>4-CDP-2-C-methyl-D-erythritol 2-phosphate</name>
        <dbReference type="ChEBI" id="CHEBI:57919"/>
    </ligand>
</feature>
<feature type="binding site" evidence="1">
    <location>
        <position position="10"/>
    </location>
    <ligand>
        <name>a divalent metal cation</name>
        <dbReference type="ChEBI" id="CHEBI:60240"/>
    </ligand>
</feature>
<feature type="binding site" evidence="1">
    <location>
        <position position="12"/>
    </location>
    <ligand>
        <name>a divalent metal cation</name>
        <dbReference type="ChEBI" id="CHEBI:60240"/>
    </ligand>
</feature>
<feature type="binding site" evidence="1">
    <location>
        <begin position="36"/>
        <end position="37"/>
    </location>
    <ligand>
        <name>4-CDP-2-C-methyl-D-erythritol 2-phosphate</name>
        <dbReference type="ChEBI" id="CHEBI:57919"/>
    </ligand>
</feature>
<feature type="binding site" evidence="1">
    <location>
        <position position="44"/>
    </location>
    <ligand>
        <name>a divalent metal cation</name>
        <dbReference type="ChEBI" id="CHEBI:60240"/>
    </ligand>
</feature>
<feature type="binding site" evidence="1">
    <location>
        <begin position="58"/>
        <end position="60"/>
    </location>
    <ligand>
        <name>4-CDP-2-C-methyl-D-erythritol 2-phosphate</name>
        <dbReference type="ChEBI" id="CHEBI:57919"/>
    </ligand>
</feature>
<feature type="binding site" evidence="1">
    <location>
        <begin position="63"/>
        <end position="67"/>
    </location>
    <ligand>
        <name>4-CDP-2-C-methyl-D-erythritol 2-phosphate</name>
        <dbReference type="ChEBI" id="CHEBI:57919"/>
    </ligand>
</feature>
<feature type="binding site" evidence="1">
    <location>
        <begin position="134"/>
        <end position="137"/>
    </location>
    <ligand>
        <name>4-CDP-2-C-methyl-D-erythritol 2-phosphate</name>
        <dbReference type="ChEBI" id="CHEBI:57919"/>
    </ligand>
</feature>
<feature type="binding site" evidence="1">
    <location>
        <position position="144"/>
    </location>
    <ligand>
        <name>4-CDP-2-C-methyl-D-erythritol 2-phosphate</name>
        <dbReference type="ChEBI" id="CHEBI:57919"/>
    </ligand>
</feature>
<feature type="site" description="Transition state stabilizer" evidence="1">
    <location>
        <position position="36"/>
    </location>
</feature>
<feature type="site" description="Transition state stabilizer" evidence="1">
    <location>
        <position position="135"/>
    </location>
</feature>
<proteinExistence type="inferred from homology"/>
<dbReference type="EC" id="4.6.1.12" evidence="1"/>
<dbReference type="EMBL" id="CP000383">
    <property type="protein sequence ID" value="ABG60420.1"/>
    <property type="molecule type" value="Genomic_DNA"/>
</dbReference>
<dbReference type="RefSeq" id="WP_011586530.1">
    <property type="nucleotide sequence ID" value="NC_008255.1"/>
</dbReference>
<dbReference type="SMR" id="Q11Q93"/>
<dbReference type="STRING" id="269798.CHU_3180"/>
<dbReference type="KEGG" id="chu:CHU_3180"/>
<dbReference type="eggNOG" id="COG0245">
    <property type="taxonomic scope" value="Bacteria"/>
</dbReference>
<dbReference type="HOGENOM" id="CLU_084630_2_0_10"/>
<dbReference type="OrthoDB" id="9804336at2"/>
<dbReference type="UniPathway" id="UPA00056">
    <property type="reaction ID" value="UER00095"/>
</dbReference>
<dbReference type="Proteomes" id="UP000001822">
    <property type="component" value="Chromosome"/>
</dbReference>
<dbReference type="GO" id="GO:0008685">
    <property type="term" value="F:2-C-methyl-D-erythritol 2,4-cyclodiphosphate synthase activity"/>
    <property type="evidence" value="ECO:0007669"/>
    <property type="project" value="UniProtKB-UniRule"/>
</dbReference>
<dbReference type="GO" id="GO:0046872">
    <property type="term" value="F:metal ion binding"/>
    <property type="evidence" value="ECO:0007669"/>
    <property type="project" value="UniProtKB-KW"/>
</dbReference>
<dbReference type="GO" id="GO:0019288">
    <property type="term" value="P:isopentenyl diphosphate biosynthetic process, methylerythritol 4-phosphate pathway"/>
    <property type="evidence" value="ECO:0007669"/>
    <property type="project" value="UniProtKB-UniRule"/>
</dbReference>
<dbReference type="GO" id="GO:0016114">
    <property type="term" value="P:terpenoid biosynthetic process"/>
    <property type="evidence" value="ECO:0007669"/>
    <property type="project" value="InterPro"/>
</dbReference>
<dbReference type="CDD" id="cd00554">
    <property type="entry name" value="MECDP_synthase"/>
    <property type="match status" value="1"/>
</dbReference>
<dbReference type="FunFam" id="3.30.1330.50:FF:000001">
    <property type="entry name" value="2-C-methyl-D-erythritol 2,4-cyclodiphosphate synthase"/>
    <property type="match status" value="1"/>
</dbReference>
<dbReference type="Gene3D" id="3.30.1330.50">
    <property type="entry name" value="2-C-methyl-D-erythritol 2,4-cyclodiphosphate synthase"/>
    <property type="match status" value="1"/>
</dbReference>
<dbReference type="HAMAP" id="MF_00107">
    <property type="entry name" value="IspF"/>
    <property type="match status" value="1"/>
</dbReference>
<dbReference type="InterPro" id="IPR003526">
    <property type="entry name" value="MECDP_synthase"/>
</dbReference>
<dbReference type="InterPro" id="IPR020555">
    <property type="entry name" value="MECDP_synthase_CS"/>
</dbReference>
<dbReference type="InterPro" id="IPR036571">
    <property type="entry name" value="MECDP_synthase_sf"/>
</dbReference>
<dbReference type="NCBIfam" id="TIGR00151">
    <property type="entry name" value="ispF"/>
    <property type="match status" value="1"/>
</dbReference>
<dbReference type="PANTHER" id="PTHR43181">
    <property type="entry name" value="2-C-METHYL-D-ERYTHRITOL 2,4-CYCLODIPHOSPHATE SYNTHASE, CHLOROPLASTIC"/>
    <property type="match status" value="1"/>
</dbReference>
<dbReference type="PANTHER" id="PTHR43181:SF1">
    <property type="entry name" value="2-C-METHYL-D-ERYTHRITOL 2,4-CYCLODIPHOSPHATE SYNTHASE, CHLOROPLASTIC"/>
    <property type="match status" value="1"/>
</dbReference>
<dbReference type="Pfam" id="PF02542">
    <property type="entry name" value="YgbB"/>
    <property type="match status" value="1"/>
</dbReference>
<dbReference type="SUPFAM" id="SSF69765">
    <property type="entry name" value="IpsF-like"/>
    <property type="match status" value="1"/>
</dbReference>
<dbReference type="PROSITE" id="PS01350">
    <property type="entry name" value="ISPF"/>
    <property type="match status" value="1"/>
</dbReference>
<organism>
    <name type="scientific">Cytophaga hutchinsonii (strain ATCC 33406 / DSM 1761 / CIP 103989 / NBRC 15051 / NCIMB 9469 / D465)</name>
    <dbReference type="NCBI Taxonomy" id="269798"/>
    <lineage>
        <taxon>Bacteria</taxon>
        <taxon>Pseudomonadati</taxon>
        <taxon>Bacteroidota</taxon>
        <taxon>Cytophagia</taxon>
        <taxon>Cytophagales</taxon>
        <taxon>Cytophagaceae</taxon>
        <taxon>Cytophaga</taxon>
    </lineage>
</organism>
<protein>
    <recommendedName>
        <fullName evidence="1">2-C-methyl-D-erythritol 2,4-cyclodiphosphate synthase</fullName>
        <shortName evidence="1">MECDP-synthase</shortName>
        <shortName evidence="1">MECPP-synthase</shortName>
        <shortName evidence="1">MECPS</shortName>
        <ecNumber evidence="1">4.6.1.12</ecNumber>
    </recommendedName>
</protein>
<keyword id="KW-0414">Isoprene biosynthesis</keyword>
<keyword id="KW-0456">Lyase</keyword>
<keyword id="KW-0479">Metal-binding</keyword>
<keyword id="KW-1185">Reference proteome</keyword>
<name>ISPF_CYTH3</name>
<gene>
    <name evidence="1" type="primary">ispF</name>
    <name type="ordered locus">CHU_3180</name>
</gene>
<comment type="function">
    <text evidence="1">Involved in the biosynthesis of isopentenyl diphosphate (IPP) and dimethylallyl diphosphate (DMAPP), two major building blocks of isoprenoid compounds. Catalyzes the conversion of 4-diphosphocytidyl-2-C-methyl-D-erythritol 2-phosphate (CDP-ME2P) to 2-C-methyl-D-erythritol 2,4-cyclodiphosphate (ME-CPP) with a corresponding release of cytidine 5-monophosphate (CMP).</text>
</comment>
<comment type="catalytic activity">
    <reaction evidence="1">
        <text>4-CDP-2-C-methyl-D-erythritol 2-phosphate = 2-C-methyl-D-erythritol 2,4-cyclic diphosphate + CMP</text>
        <dbReference type="Rhea" id="RHEA:23864"/>
        <dbReference type="ChEBI" id="CHEBI:57919"/>
        <dbReference type="ChEBI" id="CHEBI:58483"/>
        <dbReference type="ChEBI" id="CHEBI:60377"/>
        <dbReference type="EC" id="4.6.1.12"/>
    </reaction>
</comment>
<comment type="cofactor">
    <cofactor evidence="1">
        <name>a divalent metal cation</name>
        <dbReference type="ChEBI" id="CHEBI:60240"/>
    </cofactor>
    <text evidence="1">Binds 1 divalent metal cation per subunit.</text>
</comment>
<comment type="pathway">
    <text evidence="1">Isoprenoid biosynthesis; isopentenyl diphosphate biosynthesis via DXP pathway; isopentenyl diphosphate from 1-deoxy-D-xylulose 5-phosphate: step 4/6.</text>
</comment>
<comment type="subunit">
    <text evidence="1">Homotrimer.</text>
</comment>
<comment type="similarity">
    <text evidence="1">Belongs to the IspF family.</text>
</comment>
<sequence length="159" mass="17634">MKIKVGFGYDVHQLKEGRPMWLGGIQLEYTKGPDGHSDADVLIHAICDAILGAANMRDIGFHFANTDDRWKGVDSKVLLKEVCRMIREKGWEISNVDASLALEMPKINPHIERMQTALSEAMSIPVEDISIKATTNEKLGYVGREEGVNAYAVALLIKP</sequence>
<accession>Q11Q93</accession>
<reference key="1">
    <citation type="journal article" date="2007" name="Appl. Environ. Microbiol.">
        <title>Genome sequence of the cellulolytic gliding bacterium Cytophaga hutchinsonii.</title>
        <authorList>
            <person name="Xie G."/>
            <person name="Bruce D.C."/>
            <person name="Challacombe J.F."/>
            <person name="Chertkov O."/>
            <person name="Detter J.C."/>
            <person name="Gilna P."/>
            <person name="Han C.S."/>
            <person name="Lucas S."/>
            <person name="Misra M."/>
            <person name="Myers G.L."/>
            <person name="Richardson P."/>
            <person name="Tapia R."/>
            <person name="Thayer N."/>
            <person name="Thompson L.S."/>
            <person name="Brettin T.S."/>
            <person name="Henrissat B."/>
            <person name="Wilson D.B."/>
            <person name="McBride M.J."/>
        </authorList>
    </citation>
    <scope>NUCLEOTIDE SEQUENCE [LARGE SCALE GENOMIC DNA]</scope>
    <source>
        <strain>ATCC 33406 / DSM 1761 / JCM 20678 / CIP 103989 / IAM 12607 / NBRC 15051 / NCIMB 9469 / D465</strain>
    </source>
</reference>
<evidence type="ECO:0000255" key="1">
    <source>
        <dbReference type="HAMAP-Rule" id="MF_00107"/>
    </source>
</evidence>